<comment type="function">
    <text evidence="1">Involved in the biosynthesis of osmoregulated periplasmic glucans (OPGs).</text>
</comment>
<comment type="pathway">
    <text evidence="1">Glycan metabolism; osmoregulated periplasmic glucan (OPG) biosynthesis.</text>
</comment>
<comment type="subcellular location">
    <subcellularLocation>
        <location evidence="1">Cell inner membrane</location>
        <topology evidence="1">Multi-pass membrane protein</topology>
    </subcellularLocation>
</comment>
<comment type="similarity">
    <text evidence="1">Belongs to the glycosyltransferase 2 family. OpgH subfamily.</text>
</comment>
<reference key="1">
    <citation type="submission" date="2007-03" db="EMBL/GenBank/DDBJ databases">
        <authorList>
            <person name="Heidelberg J."/>
        </authorList>
    </citation>
    <scope>NUCLEOTIDE SEQUENCE [LARGE SCALE GENOMIC DNA]</scope>
    <source>
        <strain>ATCC 39541 / Classical Ogawa 395 / O395</strain>
    </source>
</reference>
<reference key="2">
    <citation type="journal article" date="2008" name="PLoS ONE">
        <title>A recalibrated molecular clock and independent origins for the cholera pandemic clones.</title>
        <authorList>
            <person name="Feng L."/>
            <person name="Reeves P.R."/>
            <person name="Lan R."/>
            <person name="Ren Y."/>
            <person name="Gao C."/>
            <person name="Zhou Z."/>
            <person name="Ren Y."/>
            <person name="Cheng J."/>
            <person name="Wang W."/>
            <person name="Wang J."/>
            <person name="Qian W."/>
            <person name="Li D."/>
            <person name="Wang L."/>
        </authorList>
    </citation>
    <scope>NUCLEOTIDE SEQUENCE [LARGE SCALE GENOMIC DNA]</scope>
    <source>
        <strain>ATCC 39541 / Classical Ogawa 395 / O395</strain>
    </source>
</reference>
<gene>
    <name evidence="1" type="primary">opgH</name>
    <name type="synonym">mdoH</name>
    <name type="ordered locus">VC0395_A0906</name>
    <name type="ordered locus">VC395_1406</name>
</gene>
<name>OPGH_VIBC3</name>
<feature type="chain" id="PRO_1000084505" description="Glucans biosynthesis glucosyltransferase H">
    <location>
        <begin position="1"/>
        <end position="721"/>
    </location>
</feature>
<feature type="transmembrane region" description="Helical" evidence="1">
    <location>
        <begin position="52"/>
        <end position="72"/>
    </location>
</feature>
<feature type="transmembrane region" description="Helical" evidence="1">
    <location>
        <begin position="97"/>
        <end position="117"/>
    </location>
</feature>
<feature type="transmembrane region" description="Helical" evidence="1">
    <location>
        <begin position="412"/>
        <end position="432"/>
    </location>
</feature>
<feature type="transmembrane region" description="Helical" evidence="1">
    <location>
        <begin position="459"/>
        <end position="479"/>
    </location>
</feature>
<feature type="transmembrane region" description="Helical" evidence="1">
    <location>
        <begin position="505"/>
        <end position="525"/>
    </location>
</feature>
<feature type="transmembrane region" description="Helical" evidence="1">
    <location>
        <begin position="570"/>
        <end position="590"/>
    </location>
</feature>
<organism>
    <name type="scientific">Vibrio cholerae serotype O1 (strain ATCC 39541 / Classical Ogawa 395 / O395)</name>
    <dbReference type="NCBI Taxonomy" id="345073"/>
    <lineage>
        <taxon>Bacteria</taxon>
        <taxon>Pseudomonadati</taxon>
        <taxon>Pseudomonadota</taxon>
        <taxon>Gammaproteobacteria</taxon>
        <taxon>Vibrionales</taxon>
        <taxon>Vibrionaceae</taxon>
        <taxon>Vibrio</taxon>
    </lineage>
</organism>
<protein>
    <recommendedName>
        <fullName evidence="1">Glucans biosynthesis glucosyltransferase H</fullName>
        <ecNumber evidence="1">2.4.1.-</ecNumber>
    </recommendedName>
</protein>
<sequence>MTNPMVEQGASQLMGGSAMPPEQHGEMPEQNLKRLSEGFPRDAIQTGGVKSCSWRRVFVVGFALLISAFAIFEMRGVFLVGGLTPIEYAVLVLFAINFCWIALAFSSSIAGFFVLASRKPAPNTEQPLTTRTAILMPTYNEAPDRVFAAVETMALALAKTEHGHAFDWFILSDTTDPEVALSEEQAFWLLRQQTAGKANVYYRRRRKNIARKAGNIADFCRRWGSGYDHLLVLDADSVMQPSTMISLAQRMQSDPDAGLIQTIPALINGTTLMARVQQFAARIYGPVVGTGLAWWVQKEGNFWGHNAIIRTEAFMSAAGLPHLSGRPPFGGHILSHDFVEAALIRRAGWSVTIAADLSGSFEECPPSIIDLAVRDRRWCQGNLQHSRIIGTKGLHWISRLHLTTGIMSYLSSPFWLLLILSGLLLALQAHFIRPEYFTEQFSLFPTWPVMDSARALQLFYITMGILFSPKIFGLLLLMFDGEMCRTLGGRLRVILSAVTEILLSALVAPIMMLIHCGAVVSILFGRDSGWAPQRRDDGSLPIKDLLYRHRWHMTAGVLLGYAAMLDSWTLLAWMSPALIGLWFSVPLSGITASYTIGAWFKQKRILATPEEIETPAIVLAAQARRDEYVVDLQEVWNARMVLADHNLIALHIAMMDKLPSRQPGTAIEPLDAVARIKVQEAESQESLLALLTKVELSYVLGNPLLIQQVAKLPPSLANQTV</sequence>
<proteinExistence type="inferred from homology"/>
<evidence type="ECO:0000255" key="1">
    <source>
        <dbReference type="HAMAP-Rule" id="MF_01072"/>
    </source>
</evidence>
<dbReference type="EC" id="2.4.1.-" evidence="1"/>
<dbReference type="EMBL" id="CP000627">
    <property type="protein sequence ID" value="ABQ21968.1"/>
    <property type="molecule type" value="Genomic_DNA"/>
</dbReference>
<dbReference type="EMBL" id="CP001235">
    <property type="protein sequence ID" value="ACP09414.1"/>
    <property type="molecule type" value="Genomic_DNA"/>
</dbReference>
<dbReference type="CAZy" id="GT2">
    <property type="family name" value="Glycosyltransferase Family 2"/>
</dbReference>
<dbReference type="KEGG" id="vco:VC0395_A0906"/>
<dbReference type="KEGG" id="vcr:VC395_1406"/>
<dbReference type="PATRIC" id="fig|345073.21.peg.1365"/>
<dbReference type="eggNOG" id="COG2943">
    <property type="taxonomic scope" value="Bacteria"/>
</dbReference>
<dbReference type="HOGENOM" id="CLU_015730_1_0_6"/>
<dbReference type="OrthoDB" id="9775281at2"/>
<dbReference type="UniPathway" id="UPA00637"/>
<dbReference type="Proteomes" id="UP000000249">
    <property type="component" value="Chromosome 2"/>
</dbReference>
<dbReference type="GO" id="GO:0005886">
    <property type="term" value="C:plasma membrane"/>
    <property type="evidence" value="ECO:0007669"/>
    <property type="project" value="UniProtKB-SubCell"/>
</dbReference>
<dbReference type="GO" id="GO:0016758">
    <property type="term" value="F:hexosyltransferase activity"/>
    <property type="evidence" value="ECO:0007669"/>
    <property type="project" value="UniProtKB-UniRule"/>
</dbReference>
<dbReference type="GO" id="GO:0009250">
    <property type="term" value="P:glucan biosynthetic process"/>
    <property type="evidence" value="ECO:0007669"/>
    <property type="project" value="UniProtKB-UniRule"/>
</dbReference>
<dbReference type="CDD" id="cd04191">
    <property type="entry name" value="Glucan_BSP_MdoH"/>
    <property type="match status" value="1"/>
</dbReference>
<dbReference type="Gene3D" id="3.90.550.10">
    <property type="entry name" value="Spore Coat Polysaccharide Biosynthesis Protein SpsA, Chain A"/>
    <property type="match status" value="1"/>
</dbReference>
<dbReference type="HAMAP" id="MF_01072">
    <property type="entry name" value="MdoH_OpgH"/>
    <property type="match status" value="1"/>
</dbReference>
<dbReference type="InterPro" id="IPR023725">
    <property type="entry name" value="Glucans_biosynth_gluTrFase_H"/>
</dbReference>
<dbReference type="InterPro" id="IPR001173">
    <property type="entry name" value="Glyco_trans_2-like"/>
</dbReference>
<dbReference type="InterPro" id="IPR050321">
    <property type="entry name" value="Glycosyltr_2/OpgH_subfam"/>
</dbReference>
<dbReference type="InterPro" id="IPR029044">
    <property type="entry name" value="Nucleotide-diphossugar_trans"/>
</dbReference>
<dbReference type="NCBIfam" id="NF003956">
    <property type="entry name" value="PRK05454.1-3"/>
    <property type="match status" value="1"/>
</dbReference>
<dbReference type="NCBIfam" id="NF003958">
    <property type="entry name" value="PRK05454.2-1"/>
    <property type="match status" value="1"/>
</dbReference>
<dbReference type="NCBIfam" id="NF003962">
    <property type="entry name" value="PRK05454.2-5"/>
    <property type="match status" value="1"/>
</dbReference>
<dbReference type="PANTHER" id="PTHR43867">
    <property type="entry name" value="CELLULOSE SYNTHASE CATALYTIC SUBUNIT A [UDP-FORMING]"/>
    <property type="match status" value="1"/>
</dbReference>
<dbReference type="PANTHER" id="PTHR43867:SF5">
    <property type="entry name" value="GLUCANS BIOSYNTHESIS GLUCOSYLTRANSFERASE H"/>
    <property type="match status" value="1"/>
</dbReference>
<dbReference type="Pfam" id="PF13632">
    <property type="entry name" value="Glyco_trans_2_3"/>
    <property type="match status" value="1"/>
</dbReference>
<dbReference type="SUPFAM" id="SSF53448">
    <property type="entry name" value="Nucleotide-diphospho-sugar transferases"/>
    <property type="match status" value="1"/>
</dbReference>
<accession>A5F1Q0</accession>
<accession>C3M048</accession>
<keyword id="KW-0997">Cell inner membrane</keyword>
<keyword id="KW-1003">Cell membrane</keyword>
<keyword id="KW-0328">Glycosyltransferase</keyword>
<keyword id="KW-0472">Membrane</keyword>
<keyword id="KW-0808">Transferase</keyword>
<keyword id="KW-0812">Transmembrane</keyword>
<keyword id="KW-1133">Transmembrane helix</keyword>